<name>HXCDA_DANRE</name>
<protein>
    <recommendedName>
        <fullName>Homeobox protein Hox-C13a</fullName>
    </recommendedName>
</protein>
<keyword id="KW-0217">Developmental protein</keyword>
<keyword id="KW-0238">DNA-binding</keyword>
<keyword id="KW-0371">Homeobox</keyword>
<keyword id="KW-0539">Nucleus</keyword>
<keyword id="KW-1185">Reference proteome</keyword>
<keyword id="KW-0804">Transcription</keyword>
<keyword id="KW-0805">Transcription regulation</keyword>
<comment type="function">
    <text evidence="1">Sequence-specific transcription factor which is part of a developmental regulatory system that provides cells with specific positional identities on the anterior-posterior axis.</text>
</comment>
<comment type="subcellular location">
    <subcellularLocation>
        <location evidence="2">Nucleus</location>
    </subcellularLocation>
</comment>
<comment type="developmental stage">
    <text evidence="3">First detected in the posterior tail bud at around 16.5 hours post-fertilization (hpf), expression continuing through to 36 hpf. Expressed in the developing fin fold and neural tube from 48-72 hpf.</text>
</comment>
<comment type="similarity">
    <text evidence="4">Belongs to the Abd-B homeobox family.</text>
</comment>
<proteinExistence type="evidence at transcript level"/>
<evidence type="ECO:0000250" key="1"/>
<evidence type="ECO:0000255" key="2">
    <source>
        <dbReference type="PROSITE-ProRule" id="PRU00108"/>
    </source>
</evidence>
<evidence type="ECO:0000269" key="3">
    <source>
    </source>
</evidence>
<evidence type="ECO:0000305" key="4"/>
<accession>Q6JIY5</accession>
<accession>Q4PR83</accession>
<accession>Q9YGS9</accession>
<feature type="chain" id="PRO_0000200199" description="Homeobox protein Hox-C13a">
    <location>
        <begin position="1"/>
        <end position="306"/>
    </location>
</feature>
<feature type="DNA-binding region" description="Homeobox" evidence="2">
    <location>
        <begin position="236"/>
        <end position="295"/>
    </location>
</feature>
<feature type="sequence conflict" description="In Ref. 2; AAY67938." evidence="4" ref="2">
    <original>L</original>
    <variation>F</variation>
    <location>
        <position position="154"/>
    </location>
</feature>
<feature type="sequence conflict" description="In Ref. 2; AAY67938." evidence="4" ref="2">
    <original>V</original>
    <variation>A</variation>
    <location>
        <position position="175"/>
    </location>
</feature>
<organism>
    <name type="scientific">Danio rerio</name>
    <name type="common">Zebrafish</name>
    <name type="synonym">Brachydanio rerio</name>
    <dbReference type="NCBI Taxonomy" id="7955"/>
    <lineage>
        <taxon>Eukaryota</taxon>
        <taxon>Metazoa</taxon>
        <taxon>Chordata</taxon>
        <taxon>Craniata</taxon>
        <taxon>Vertebrata</taxon>
        <taxon>Euteleostomi</taxon>
        <taxon>Actinopterygii</taxon>
        <taxon>Neopterygii</taxon>
        <taxon>Teleostei</taxon>
        <taxon>Ostariophysi</taxon>
        <taxon>Cypriniformes</taxon>
        <taxon>Danionidae</taxon>
        <taxon>Danioninae</taxon>
        <taxon>Danio</taxon>
    </lineage>
</organism>
<dbReference type="EMBL" id="AY452737">
    <property type="protein sequence ID" value="AAS16937.1"/>
    <property type="molecule type" value="mRNA"/>
</dbReference>
<dbReference type="EMBL" id="DQ060560">
    <property type="protein sequence ID" value="AAY67938.1"/>
    <property type="molecule type" value="mRNA"/>
</dbReference>
<dbReference type="EMBL" id="AF071261">
    <property type="protein sequence ID" value="AAD15954.1"/>
    <property type="molecule type" value="Genomic_DNA"/>
</dbReference>
<dbReference type="RefSeq" id="NP_571618.1">
    <property type="nucleotide sequence ID" value="NM_131543.1"/>
</dbReference>
<dbReference type="SMR" id="Q6JIY5"/>
<dbReference type="FunCoup" id="Q6JIY5">
    <property type="interactions" value="1660"/>
</dbReference>
<dbReference type="STRING" id="7955.ENSDARP00000093923"/>
<dbReference type="PaxDb" id="7955-ENSDARP00000093923"/>
<dbReference type="GeneID" id="58059"/>
<dbReference type="KEGG" id="dre:58059"/>
<dbReference type="AGR" id="ZFIN:ZDB-GENE-000822-4"/>
<dbReference type="CTD" id="58059"/>
<dbReference type="ZFIN" id="ZDB-GENE-000822-4">
    <property type="gene designation" value="hoxc13a"/>
</dbReference>
<dbReference type="eggNOG" id="KOG0487">
    <property type="taxonomic scope" value="Eukaryota"/>
</dbReference>
<dbReference type="InParanoid" id="Q6JIY5"/>
<dbReference type="OrthoDB" id="6159439at2759"/>
<dbReference type="PhylomeDB" id="Q6JIY5"/>
<dbReference type="PRO" id="PR:Q6JIY5"/>
<dbReference type="Proteomes" id="UP000000437">
    <property type="component" value="Chromosome 23"/>
</dbReference>
<dbReference type="GO" id="GO:0005634">
    <property type="term" value="C:nucleus"/>
    <property type="evidence" value="ECO:0007669"/>
    <property type="project" value="UniProtKB-SubCell"/>
</dbReference>
<dbReference type="GO" id="GO:0000981">
    <property type="term" value="F:DNA-binding transcription factor activity, RNA polymerase II-specific"/>
    <property type="evidence" value="ECO:0000318"/>
    <property type="project" value="GO_Central"/>
</dbReference>
<dbReference type="GO" id="GO:0000978">
    <property type="term" value="F:RNA polymerase II cis-regulatory region sequence-specific DNA binding"/>
    <property type="evidence" value="ECO:0000318"/>
    <property type="project" value="GO_Central"/>
</dbReference>
<dbReference type="GO" id="GO:0031101">
    <property type="term" value="P:fin regeneration"/>
    <property type="evidence" value="ECO:0000315"/>
    <property type="project" value="ZFIN"/>
</dbReference>
<dbReference type="GO" id="GO:0006357">
    <property type="term" value="P:regulation of transcription by RNA polymerase II"/>
    <property type="evidence" value="ECO:0000318"/>
    <property type="project" value="GO_Central"/>
</dbReference>
<dbReference type="CDD" id="cd00086">
    <property type="entry name" value="homeodomain"/>
    <property type="match status" value="1"/>
</dbReference>
<dbReference type="FunFam" id="1.10.10.60:FF:000130">
    <property type="entry name" value="Homeobox protein Hox-D12"/>
    <property type="match status" value="1"/>
</dbReference>
<dbReference type="Gene3D" id="1.10.10.60">
    <property type="entry name" value="Homeodomain-like"/>
    <property type="match status" value="1"/>
</dbReference>
<dbReference type="InterPro" id="IPR051003">
    <property type="entry name" value="AP_axis_regulatory_Homeobox"/>
</dbReference>
<dbReference type="InterPro" id="IPR001356">
    <property type="entry name" value="HD"/>
</dbReference>
<dbReference type="InterPro" id="IPR017970">
    <property type="entry name" value="Homeobox_CS"/>
</dbReference>
<dbReference type="InterPro" id="IPR009057">
    <property type="entry name" value="Homeodomain-like_sf"/>
</dbReference>
<dbReference type="InterPro" id="IPR022067">
    <property type="entry name" value="HoxA13_N"/>
</dbReference>
<dbReference type="PANTHER" id="PTHR45804:SF5">
    <property type="entry name" value="HOMEOBOX PROTEIN HOX-C13"/>
    <property type="match status" value="1"/>
</dbReference>
<dbReference type="PANTHER" id="PTHR45804">
    <property type="entry name" value="SEGMENTATION PROTEIN FUSHI TARAZU-LIKE PROTEIN"/>
    <property type="match status" value="1"/>
</dbReference>
<dbReference type="Pfam" id="PF00046">
    <property type="entry name" value="Homeodomain"/>
    <property type="match status" value="1"/>
</dbReference>
<dbReference type="Pfam" id="PF12284">
    <property type="entry name" value="HoxA13_N"/>
    <property type="match status" value="1"/>
</dbReference>
<dbReference type="SMART" id="SM00389">
    <property type="entry name" value="HOX"/>
    <property type="match status" value="1"/>
</dbReference>
<dbReference type="SUPFAM" id="SSF46689">
    <property type="entry name" value="Homeodomain-like"/>
    <property type="match status" value="1"/>
</dbReference>
<dbReference type="PROSITE" id="PS00027">
    <property type="entry name" value="HOMEOBOX_1"/>
    <property type="match status" value="1"/>
</dbReference>
<dbReference type="PROSITE" id="PS50071">
    <property type="entry name" value="HOMEOBOX_2"/>
    <property type="match status" value="1"/>
</dbReference>
<sequence length="306" mass="34701">MTTSQVLHPRWADTLMYVYEKSPNENNQNKSQIMEGLSGNCPATHCRELISHPALGRHSGTIATHQGSVYSDISSPETGRQCPAPQTSSSASLSYGYPFGNPYYGCRLSHSHNVNLQQKPCSYHPAEKYAETSSALPTEELSSRAKEFAFYPSLASSYQAVPGYLDMSVVPSISVHPEPRHDALIPMEGYQHWALSNGWDGQVYCSKEQTQSSHLWKSPFPDVVPLQPEVSSYRRGRKKRVPYTKIQLKELEKEYAASKFITKDKRRRISATTNLSERQVTIWFQNRRVKEKKFVSKSKTNNHMHT</sequence>
<reference key="1">
    <citation type="journal article" date="2004" name="Dev. Biol.">
        <title>Differences in expression pattern and function between zebrafish hoxc13 orthologs: recruitment of Hoxc13b into an early embryonic role.</title>
        <authorList>
            <person name="Thummel R."/>
            <person name="Li L."/>
            <person name="Tanase C."/>
            <person name="Sarras M.P. Jr."/>
            <person name="Godwin A.R."/>
        </authorList>
    </citation>
    <scope>NUCLEOTIDE SEQUENCE [MRNA]</scope>
    <scope>DEVELOPMENTAL STAGE</scope>
    <source>
        <tissue>Embryo</tissue>
    </source>
</reference>
<reference key="2">
    <citation type="journal article" date="2005" name="Evol. Dev.">
        <title>Genomic annotation and transcriptome analysis of the zebrafish (Danio rerio) hox complex with description of a novel member, hoxb13a.</title>
        <authorList>
            <person name="Corredor-Adamez M."/>
            <person name="Welten M.C.M."/>
            <person name="Spaink H.P."/>
            <person name="Jeffery J.E."/>
            <person name="Schoon R.T."/>
            <person name="de Bakker M.A.G."/>
            <person name="Bagowski C.P."/>
            <person name="Meijer A.H."/>
            <person name="Verbeek F.J."/>
            <person name="Richardson M.K."/>
        </authorList>
    </citation>
    <scope>NUCLEOTIDE SEQUENCE [MRNA] OF 116-235</scope>
    <source>
        <strain>Tuebingen</strain>
    </source>
</reference>
<reference key="3">
    <citation type="journal article" date="1998" name="Science">
        <title>Zebrafish hox clusters and vertebrate genome evolution.</title>
        <authorList>
            <person name="Amores A."/>
            <person name="Force A."/>
            <person name="Yan Y.-L."/>
            <person name="Joly L."/>
            <person name="Amemiya C."/>
            <person name="Fritz A."/>
            <person name="Ho R.K."/>
            <person name="Langeland J."/>
            <person name="Prince V.E."/>
            <person name="Wang Y.-L."/>
            <person name="Westerfield M."/>
            <person name="Ekker M."/>
            <person name="Postlethwait J.H."/>
        </authorList>
    </citation>
    <scope>NUCLEOTIDE SEQUENCE [GENOMIC DNA] OF 236-306</scope>
</reference>
<gene>
    <name type="primary">hoxc13a</name>
</gene>